<organism>
    <name type="scientific">Heterodontus francisci</name>
    <name type="common">Horn shark</name>
    <name type="synonym">Cestracion francisci</name>
    <dbReference type="NCBI Taxonomy" id="7792"/>
    <lineage>
        <taxon>Eukaryota</taxon>
        <taxon>Metazoa</taxon>
        <taxon>Chordata</taxon>
        <taxon>Craniata</taxon>
        <taxon>Vertebrata</taxon>
        <taxon>Chondrichthyes</taxon>
        <taxon>Elasmobranchii</taxon>
        <taxon>Galeomorphii</taxon>
        <taxon>Heterodontoidea</taxon>
        <taxon>Heterodontiformes</taxon>
        <taxon>Heterodontidae</taxon>
        <taxon>Heterodontus</taxon>
    </lineage>
</organism>
<sequence>MDNARMNSFLDYSIINGETGTCSSRSYHADQGITTYQSCAVSNNNCNADDRYIVSRSVQIGAPPPHHHHHQSNYTHPNNLGISYSAHPNCGAGYPAQSFNTGYSHHYSLNQETDGNGGYPQCAPAVYPGNIASAISPHHHSYGGMVGSGQYPHHPYGQEQQGLALAAGCHSLSPVHGSHQEACCSPSAETPPPAQTFDWMKVKRNPPKTGKAGEYGFAGQPNTVRTNFTTKQLTELEKEFHFNKYLTRARRVEIAAALQLNETQVKIWFQNRRMKQKKREKEGLTSASPATPGSEANTEDTSDKCNSTSSTPSPSSSTSETINTSG</sequence>
<comment type="function">
    <text evidence="1">Sequence-specific transcription factor. Part of a developmental regulatory system that provides cells with specific positional identities on the anterior-posterior axis. Acts on the anterior body structures. Seems to act in the maintenance and/or generation of hindbrain segments.</text>
</comment>
<comment type="subcellular location">
    <subcellularLocation>
        <location evidence="2">Nucleus</location>
    </subcellularLocation>
</comment>
<comment type="similarity">
    <text evidence="4">Belongs to the Antp homeobox family. Labial subfamily.</text>
</comment>
<feature type="chain" id="PRO_0000200034" description="Homeobox protein Hox-A1">
    <location>
        <begin position="1"/>
        <end position="326"/>
    </location>
</feature>
<feature type="DNA-binding region" description="Homeobox" evidence="2">
    <location>
        <begin position="221"/>
        <end position="280"/>
    </location>
</feature>
<feature type="region of interest" description="Disordered" evidence="3">
    <location>
        <begin position="273"/>
        <end position="326"/>
    </location>
</feature>
<feature type="short sequence motif" description="Antp-type hexapeptide">
    <location>
        <begin position="196"/>
        <end position="201"/>
    </location>
</feature>
<feature type="compositionally biased region" description="Polar residues" evidence="3">
    <location>
        <begin position="285"/>
        <end position="296"/>
    </location>
</feature>
<feature type="compositionally biased region" description="Low complexity" evidence="3">
    <location>
        <begin position="306"/>
        <end position="326"/>
    </location>
</feature>
<reference key="1">
    <citation type="journal article" date="2000" name="Proc. Natl. Acad. Sci. U.S.A.">
        <title>Hox cluster genomics in the horn shark, Heterodontus francisci.</title>
        <authorList>
            <person name="Kim C.B."/>
            <person name="Amemiya C."/>
            <person name="Bailey W."/>
            <person name="Kawasaki K."/>
            <person name="Mezey J."/>
            <person name="Miller W."/>
            <person name="Minoshima S."/>
            <person name="Shimizu N."/>
            <person name="Wagner G."/>
            <person name="Ruddle F."/>
        </authorList>
    </citation>
    <scope>NUCLEOTIDE SEQUENCE [GENOMIC DNA]</scope>
</reference>
<gene>
    <name type="primary">HOXA1</name>
</gene>
<keyword id="KW-0217">Developmental protein</keyword>
<keyword id="KW-0238">DNA-binding</keyword>
<keyword id="KW-0371">Homeobox</keyword>
<keyword id="KW-0539">Nucleus</keyword>
<keyword id="KW-0804">Transcription</keyword>
<keyword id="KW-0805">Transcription regulation</keyword>
<dbReference type="EMBL" id="AF224262">
    <property type="protein sequence ID" value="AAF44639.1"/>
    <property type="molecule type" value="Genomic_DNA"/>
</dbReference>
<dbReference type="SMR" id="Q9IA19"/>
<dbReference type="GO" id="GO:0005634">
    <property type="term" value="C:nucleus"/>
    <property type="evidence" value="ECO:0007669"/>
    <property type="project" value="UniProtKB-SubCell"/>
</dbReference>
<dbReference type="GO" id="GO:0000981">
    <property type="term" value="F:DNA-binding transcription factor activity, RNA polymerase II-specific"/>
    <property type="evidence" value="ECO:0007669"/>
    <property type="project" value="InterPro"/>
</dbReference>
<dbReference type="GO" id="GO:0000978">
    <property type="term" value="F:RNA polymerase II cis-regulatory region sequence-specific DNA binding"/>
    <property type="evidence" value="ECO:0007669"/>
    <property type="project" value="TreeGrafter"/>
</dbReference>
<dbReference type="CDD" id="cd00086">
    <property type="entry name" value="homeodomain"/>
    <property type="match status" value="1"/>
</dbReference>
<dbReference type="FunFam" id="1.10.10.60:FF:000113">
    <property type="entry name" value="homeobox protein Hox-B1"/>
    <property type="match status" value="1"/>
</dbReference>
<dbReference type="Gene3D" id="1.10.10.60">
    <property type="entry name" value="Homeodomain-like"/>
    <property type="match status" value="1"/>
</dbReference>
<dbReference type="InterPro" id="IPR001356">
    <property type="entry name" value="HD"/>
</dbReference>
<dbReference type="InterPro" id="IPR020479">
    <property type="entry name" value="HD_metazoa"/>
</dbReference>
<dbReference type="InterPro" id="IPR017970">
    <property type="entry name" value="Homeobox_CS"/>
</dbReference>
<dbReference type="InterPro" id="IPR009057">
    <property type="entry name" value="Homeodomain-like_sf"/>
</dbReference>
<dbReference type="InterPro" id="IPR046327">
    <property type="entry name" value="HXA1/B1/D1"/>
</dbReference>
<dbReference type="PANTHER" id="PTHR45946:SF3">
    <property type="entry name" value="HOMEOBOX PROTEIN HOX-A1"/>
    <property type="match status" value="1"/>
</dbReference>
<dbReference type="PANTHER" id="PTHR45946">
    <property type="entry name" value="HOMEOBOX PROTEIN ROUGH-RELATED"/>
    <property type="match status" value="1"/>
</dbReference>
<dbReference type="Pfam" id="PF00046">
    <property type="entry name" value="Homeodomain"/>
    <property type="match status" value="1"/>
</dbReference>
<dbReference type="PRINTS" id="PR00024">
    <property type="entry name" value="HOMEOBOX"/>
</dbReference>
<dbReference type="SMART" id="SM00389">
    <property type="entry name" value="HOX"/>
    <property type="match status" value="1"/>
</dbReference>
<dbReference type="SUPFAM" id="SSF46689">
    <property type="entry name" value="Homeodomain-like"/>
    <property type="match status" value="1"/>
</dbReference>
<dbReference type="PROSITE" id="PS00027">
    <property type="entry name" value="HOMEOBOX_1"/>
    <property type="match status" value="1"/>
</dbReference>
<dbReference type="PROSITE" id="PS50071">
    <property type="entry name" value="HOMEOBOX_2"/>
    <property type="match status" value="1"/>
</dbReference>
<accession>Q9IA19</accession>
<name>HXA1_HETFR</name>
<evidence type="ECO:0000250" key="1">
    <source>
        <dbReference type="UniProtKB" id="Q90423"/>
    </source>
</evidence>
<evidence type="ECO:0000255" key="2">
    <source>
        <dbReference type="PROSITE-ProRule" id="PRU00108"/>
    </source>
</evidence>
<evidence type="ECO:0000256" key="3">
    <source>
        <dbReference type="SAM" id="MobiDB-lite"/>
    </source>
</evidence>
<evidence type="ECO:0000305" key="4"/>
<protein>
    <recommendedName>
        <fullName>Homeobox protein Hox-A1</fullName>
    </recommendedName>
</protein>
<proteinExistence type="inferred from homology"/>